<reference key="1">
    <citation type="journal article" date="2002" name="Proc. Natl. Acad. Sci. U.S.A.">
        <title>The complete genome of hyperthermophile Methanopyrus kandleri AV19 and monophyly of archaeal methanogens.</title>
        <authorList>
            <person name="Slesarev A.I."/>
            <person name="Mezhevaya K.V."/>
            <person name="Makarova K.S."/>
            <person name="Polushin N.N."/>
            <person name="Shcherbinina O.V."/>
            <person name="Shakhova V.V."/>
            <person name="Belova G.I."/>
            <person name="Aravind L."/>
            <person name="Natale D.A."/>
            <person name="Rogozin I.B."/>
            <person name="Tatusov R.L."/>
            <person name="Wolf Y.I."/>
            <person name="Stetter K.O."/>
            <person name="Malykh A.G."/>
            <person name="Koonin E.V."/>
            <person name="Kozyavkin S.A."/>
        </authorList>
    </citation>
    <scope>NUCLEOTIDE SEQUENCE [LARGE SCALE GENOMIC DNA]</scope>
    <source>
        <strain>AV19 / DSM 6324 / JCM 9639 / NBRC 100938</strain>
    </source>
</reference>
<evidence type="ECO:0000255" key="1">
    <source>
        <dbReference type="HAMAP-Rule" id="MF_01306"/>
    </source>
</evidence>
<evidence type="ECO:0000256" key="2">
    <source>
        <dbReference type="SAM" id="MobiDB-lite"/>
    </source>
</evidence>
<evidence type="ECO:0000305" key="3"/>
<accession>Q8TVC0</accession>
<keyword id="KW-1185">Reference proteome</keyword>
<keyword id="KW-0687">Ribonucleoprotein</keyword>
<keyword id="KW-0689">Ribosomal protein</keyword>
<keyword id="KW-0694">RNA-binding</keyword>
<keyword id="KW-0699">rRNA-binding</keyword>
<gene>
    <name evidence="1" type="primary">rps4</name>
    <name type="ordered locus">MK1472</name>
</gene>
<proteinExistence type="inferred from homology"/>
<comment type="function">
    <text evidence="1">One of the primary rRNA binding proteins, it binds directly to 16S rRNA where it nucleates assembly of the body of the 30S subunit.</text>
</comment>
<comment type="function">
    <text evidence="1">With S5 and S12 plays an important role in translational accuracy.</text>
</comment>
<comment type="subunit">
    <text evidence="1">Part of the 30S ribosomal subunit. Contacts protein S5. The interaction surface between S4 and S5 is involved in control of translational fidelity.</text>
</comment>
<comment type="similarity">
    <text evidence="1">Belongs to the universal ribosomal protein uS4 family.</text>
</comment>
<dbReference type="EMBL" id="AE009439">
    <property type="protein sequence ID" value="AAM02685.1"/>
    <property type="molecule type" value="Genomic_DNA"/>
</dbReference>
<dbReference type="RefSeq" id="WP_011019840.1">
    <property type="nucleotide sequence ID" value="NC_003551.1"/>
</dbReference>
<dbReference type="SMR" id="Q8TVC0"/>
<dbReference type="FunCoup" id="Q8TVC0">
    <property type="interactions" value="169"/>
</dbReference>
<dbReference type="STRING" id="190192.MK1472"/>
<dbReference type="PaxDb" id="190192-MK1472"/>
<dbReference type="EnsemblBacteria" id="AAM02685">
    <property type="protein sequence ID" value="AAM02685"/>
    <property type="gene ID" value="MK1472"/>
</dbReference>
<dbReference type="GeneID" id="1478067"/>
<dbReference type="KEGG" id="mka:MK1472"/>
<dbReference type="PATRIC" id="fig|190192.8.peg.1628"/>
<dbReference type="HOGENOM" id="CLU_089738_1_1_2"/>
<dbReference type="InParanoid" id="Q8TVC0"/>
<dbReference type="OrthoDB" id="10429at2157"/>
<dbReference type="Proteomes" id="UP000001826">
    <property type="component" value="Chromosome"/>
</dbReference>
<dbReference type="GO" id="GO:0015935">
    <property type="term" value="C:small ribosomal subunit"/>
    <property type="evidence" value="ECO:0007669"/>
    <property type="project" value="InterPro"/>
</dbReference>
<dbReference type="GO" id="GO:0019843">
    <property type="term" value="F:rRNA binding"/>
    <property type="evidence" value="ECO:0007669"/>
    <property type="project" value="UniProtKB-UniRule"/>
</dbReference>
<dbReference type="GO" id="GO:0003735">
    <property type="term" value="F:structural constituent of ribosome"/>
    <property type="evidence" value="ECO:0007669"/>
    <property type="project" value="InterPro"/>
</dbReference>
<dbReference type="GO" id="GO:0042274">
    <property type="term" value="P:ribosomal small subunit biogenesis"/>
    <property type="evidence" value="ECO:0007669"/>
    <property type="project" value="TreeGrafter"/>
</dbReference>
<dbReference type="GO" id="GO:0006412">
    <property type="term" value="P:translation"/>
    <property type="evidence" value="ECO:0007669"/>
    <property type="project" value="UniProtKB-UniRule"/>
</dbReference>
<dbReference type="CDD" id="cd00165">
    <property type="entry name" value="S4"/>
    <property type="match status" value="1"/>
</dbReference>
<dbReference type="Gene3D" id="3.10.290.10">
    <property type="entry name" value="RNA-binding S4 domain"/>
    <property type="match status" value="1"/>
</dbReference>
<dbReference type="HAMAP" id="MF_01306_A">
    <property type="entry name" value="Ribosomal_uS4_A"/>
    <property type="match status" value="1"/>
</dbReference>
<dbReference type="InterPro" id="IPR022801">
    <property type="entry name" value="Ribosomal_uS4"/>
</dbReference>
<dbReference type="InterPro" id="IPR022802">
    <property type="entry name" value="Ribosomal_uS4_arc"/>
</dbReference>
<dbReference type="InterPro" id="IPR018079">
    <property type="entry name" value="Ribosomal_uS4_CS"/>
</dbReference>
<dbReference type="InterPro" id="IPR005710">
    <property type="entry name" value="Ribosomal_uS4_euk/arc"/>
</dbReference>
<dbReference type="InterPro" id="IPR001912">
    <property type="entry name" value="Ribosomal_uS4_N"/>
</dbReference>
<dbReference type="InterPro" id="IPR002942">
    <property type="entry name" value="S4_RNA-bd"/>
</dbReference>
<dbReference type="InterPro" id="IPR036986">
    <property type="entry name" value="S4_RNA-bd_sf"/>
</dbReference>
<dbReference type="NCBIfam" id="NF003139">
    <property type="entry name" value="PRK04051.1"/>
    <property type="match status" value="1"/>
</dbReference>
<dbReference type="NCBIfam" id="TIGR01018">
    <property type="entry name" value="uS4_arch"/>
    <property type="match status" value="1"/>
</dbReference>
<dbReference type="PANTHER" id="PTHR11831">
    <property type="entry name" value="30S 40S RIBOSOMAL PROTEIN"/>
    <property type="match status" value="1"/>
</dbReference>
<dbReference type="PANTHER" id="PTHR11831:SF5">
    <property type="entry name" value="40S RIBOSOMAL PROTEIN S9"/>
    <property type="match status" value="1"/>
</dbReference>
<dbReference type="Pfam" id="PF00163">
    <property type="entry name" value="Ribosomal_S4"/>
    <property type="match status" value="1"/>
</dbReference>
<dbReference type="Pfam" id="PF01479">
    <property type="entry name" value="S4"/>
    <property type="match status" value="1"/>
</dbReference>
<dbReference type="SMART" id="SM01390">
    <property type="entry name" value="Ribosomal_S4"/>
    <property type="match status" value="1"/>
</dbReference>
<dbReference type="SMART" id="SM00363">
    <property type="entry name" value="S4"/>
    <property type="match status" value="1"/>
</dbReference>
<dbReference type="SUPFAM" id="SSF55174">
    <property type="entry name" value="Alpha-L RNA-binding motif"/>
    <property type="match status" value="1"/>
</dbReference>
<dbReference type="PROSITE" id="PS00632">
    <property type="entry name" value="RIBOSOMAL_S4"/>
    <property type="match status" value="1"/>
</dbReference>
<dbReference type="PROSITE" id="PS50889">
    <property type="entry name" value="S4"/>
    <property type="match status" value="1"/>
</dbReference>
<name>RS4_METKA</name>
<sequence length="186" mass="22370">MGDPKRPRKKYETPRHPWEAERLEYERKLMRKYGLRRKKELWRHQTQLKRWRERAKELMARTDPEAQREREALFRKLYDLGILDKKPEEATLDDILRLTVEDVLERRLQTIVYRKGLAKTPLQARQLVVHRHIAIGDRIVTVPSYLVSREEEEEVDYSPYSPLKDEDHPIRCEARGESPEETAAEE</sequence>
<protein>
    <recommendedName>
        <fullName evidence="1">Small ribosomal subunit protein uS4</fullName>
    </recommendedName>
    <alternativeName>
        <fullName evidence="3">30S ribosomal protein S4</fullName>
    </alternativeName>
</protein>
<feature type="chain" id="PRO_0000132509" description="Small ribosomal subunit protein uS4">
    <location>
        <begin position="1"/>
        <end position="186"/>
    </location>
</feature>
<feature type="domain" description="S4 RNA-binding" evidence="1">
    <location>
        <begin position="106"/>
        <end position="170"/>
    </location>
</feature>
<feature type="region of interest" description="Disordered" evidence="2">
    <location>
        <begin position="151"/>
        <end position="186"/>
    </location>
</feature>
<feature type="compositionally biased region" description="Basic and acidic residues" evidence="2">
    <location>
        <begin position="163"/>
        <end position="178"/>
    </location>
</feature>
<organism>
    <name type="scientific">Methanopyrus kandleri (strain AV19 / DSM 6324 / JCM 9639 / NBRC 100938)</name>
    <dbReference type="NCBI Taxonomy" id="190192"/>
    <lineage>
        <taxon>Archaea</taxon>
        <taxon>Methanobacteriati</taxon>
        <taxon>Methanobacteriota</taxon>
        <taxon>Methanomada group</taxon>
        <taxon>Methanopyri</taxon>
        <taxon>Methanopyrales</taxon>
        <taxon>Methanopyraceae</taxon>
        <taxon>Methanopyrus</taxon>
    </lineage>
</organism>